<gene>
    <name type="primary">YIPF5</name>
    <name type="ORF">QccE-13521</name>
</gene>
<feature type="chain" id="PRO_0000234329" description="Protein YIPF5">
    <location>
        <begin position="1"/>
        <end position="257"/>
    </location>
</feature>
<feature type="topological domain" description="Cytoplasmic" evidence="3">
    <location>
        <begin position="1"/>
        <end position="124"/>
    </location>
</feature>
<feature type="transmembrane region" description="Helical" evidence="5">
    <location>
        <begin position="125"/>
        <end position="145"/>
    </location>
</feature>
<feature type="topological domain" description="Lumenal" evidence="6">
    <location>
        <position position="146"/>
    </location>
</feature>
<feature type="transmembrane region" description="Helical" evidence="5">
    <location>
        <begin position="147"/>
        <end position="167"/>
    </location>
</feature>
<feature type="topological domain" description="Cytoplasmic" evidence="6">
    <location>
        <begin position="168"/>
        <end position="173"/>
    </location>
</feature>
<feature type="transmembrane region" description="Helical" evidence="5">
    <location>
        <begin position="174"/>
        <end position="194"/>
    </location>
</feature>
<feature type="topological domain" description="Lumenal" evidence="6">
    <location>
        <begin position="195"/>
        <end position="196"/>
    </location>
</feature>
<feature type="transmembrane region" description="Helical" evidence="5">
    <location>
        <begin position="197"/>
        <end position="217"/>
    </location>
</feature>
<feature type="topological domain" description="Cytoplasmic" evidence="6">
    <location>
        <begin position="218"/>
        <end position="236"/>
    </location>
</feature>
<feature type="transmembrane region" description="Helical" evidence="5">
    <location>
        <begin position="237"/>
        <end position="257"/>
    </location>
</feature>
<feature type="region of interest" description="Interaction with Sec23" evidence="1">
    <location>
        <begin position="75"/>
        <end position="106"/>
    </location>
</feature>
<reference key="1">
    <citation type="submission" date="2005-06" db="EMBL/GenBank/DDBJ databases">
        <title>DNA sequences of macaque genes expressed in brain or testis and its evolutionary implications.</title>
        <authorList>
            <consortium name="International consortium for macaque cDNA sequencing and analysis"/>
        </authorList>
    </citation>
    <scope>NUCLEOTIDE SEQUENCE [LARGE SCALE MRNA]</scope>
    <source>
        <tissue>Brain cortex</tissue>
    </source>
</reference>
<dbReference type="EMBL" id="AB169519">
    <property type="protein sequence ID" value="BAE01601.1"/>
    <property type="molecule type" value="mRNA"/>
</dbReference>
<dbReference type="RefSeq" id="XP_005558175.1">
    <property type="nucleotide sequence ID" value="XM_005558118.4"/>
</dbReference>
<dbReference type="RefSeq" id="XP_045250295.1">
    <property type="nucleotide sequence ID" value="XM_045394360.2"/>
</dbReference>
<dbReference type="STRING" id="9541.ENSMFAP00000003629"/>
<dbReference type="Ensembl" id="ENSMFAT00000022290.2">
    <property type="protein sequence ID" value="ENSMFAP00000003629.1"/>
    <property type="gene ID" value="ENSMFAG00000001553.2"/>
</dbReference>
<dbReference type="GeneID" id="101866225"/>
<dbReference type="CTD" id="81555"/>
<dbReference type="VEuPathDB" id="HostDB:ENSMFAG00000001553"/>
<dbReference type="eggNOG" id="KOG3103">
    <property type="taxonomic scope" value="Eukaryota"/>
</dbReference>
<dbReference type="GeneTree" id="ENSGT00940000153168"/>
<dbReference type="OMA" id="GICVVRY"/>
<dbReference type="Proteomes" id="UP000233100">
    <property type="component" value="Chromosome 6"/>
</dbReference>
<dbReference type="Bgee" id="ENSMFAG00000001553">
    <property type="expression patterns" value="Expressed in pituitary gland and 13 other cell types or tissues"/>
</dbReference>
<dbReference type="GO" id="GO:0030134">
    <property type="term" value="C:COPII-coated ER to Golgi transport vesicle"/>
    <property type="evidence" value="ECO:0007669"/>
    <property type="project" value="UniProtKB-SubCell"/>
</dbReference>
<dbReference type="GO" id="GO:0070971">
    <property type="term" value="C:endoplasmic reticulum exit site"/>
    <property type="evidence" value="ECO:0007669"/>
    <property type="project" value="Ensembl"/>
</dbReference>
<dbReference type="GO" id="GO:0005789">
    <property type="term" value="C:endoplasmic reticulum membrane"/>
    <property type="evidence" value="ECO:0007669"/>
    <property type="project" value="UniProtKB-SubCell"/>
</dbReference>
<dbReference type="GO" id="GO:0005654">
    <property type="term" value="C:nucleoplasm"/>
    <property type="evidence" value="ECO:0007669"/>
    <property type="project" value="Ensembl"/>
</dbReference>
<dbReference type="GO" id="GO:0005802">
    <property type="term" value="C:trans-Golgi network"/>
    <property type="evidence" value="ECO:0007669"/>
    <property type="project" value="TreeGrafter"/>
</dbReference>
<dbReference type="GO" id="GO:0006888">
    <property type="term" value="P:endoplasmic reticulum to Golgi vesicle-mediated transport"/>
    <property type="evidence" value="ECO:0007669"/>
    <property type="project" value="InterPro"/>
</dbReference>
<dbReference type="GO" id="GO:0030070">
    <property type="term" value="P:insulin processing"/>
    <property type="evidence" value="ECO:0000250"/>
    <property type="project" value="UniProtKB"/>
</dbReference>
<dbReference type="GO" id="GO:0015031">
    <property type="term" value="P:protein transport"/>
    <property type="evidence" value="ECO:0007669"/>
    <property type="project" value="UniProtKB-KW"/>
</dbReference>
<dbReference type="GO" id="GO:0060628">
    <property type="term" value="P:regulation of ER to Golgi vesicle-mediated transport"/>
    <property type="evidence" value="ECO:0000250"/>
    <property type="project" value="UniProtKB"/>
</dbReference>
<dbReference type="GO" id="GO:0048280">
    <property type="term" value="P:vesicle fusion with Golgi apparatus"/>
    <property type="evidence" value="ECO:0007669"/>
    <property type="project" value="TreeGrafter"/>
</dbReference>
<dbReference type="InterPro" id="IPR045231">
    <property type="entry name" value="Yip1/4-like"/>
</dbReference>
<dbReference type="InterPro" id="IPR006977">
    <property type="entry name" value="Yip1_dom"/>
</dbReference>
<dbReference type="PANTHER" id="PTHR21236">
    <property type="entry name" value="GOLGI MEMBRANE PROTEIN YIP1"/>
    <property type="match status" value="1"/>
</dbReference>
<dbReference type="PANTHER" id="PTHR21236:SF6">
    <property type="entry name" value="PROTEIN YIPF5"/>
    <property type="match status" value="1"/>
</dbReference>
<dbReference type="Pfam" id="PF04893">
    <property type="entry name" value="Yip1"/>
    <property type="match status" value="1"/>
</dbReference>
<accession>Q4R5M4</accession>
<name>YIPF5_MACFA</name>
<proteinExistence type="evidence at transcript level"/>
<comment type="function">
    <text evidence="3">Plays a role in transport between endoplasmic reticulum and Golgi. In pancreatic beta cells, required to transport proinsulin from endoplasmic reticulum into the Golgi.</text>
</comment>
<comment type="subunit">
    <text evidence="3">Interacts with the COPII coat components Sec23 (SEC23A and/or SEC23B) and Sec24 (SEC24A and/or SEC24B) (By similarity). Interacts with YIF1A (By similarity). May interact with RAB1A (By similarity). Interacts with YIPF3 and YIPF4 (By similarity).</text>
</comment>
<comment type="subcellular location">
    <subcellularLocation>
        <location evidence="4">Endoplasmic reticulum membrane</location>
        <topology evidence="3">Multi-pass membrane protein</topology>
    </subcellularLocation>
    <subcellularLocation>
        <location evidence="3">Golgi apparatus</location>
        <location evidence="3">cis-Golgi network membrane</location>
        <topology evidence="3">Multi-pass membrane protein</topology>
    </subcellularLocation>
    <subcellularLocation>
        <location evidence="2">Cytoplasmic vesicle</location>
        <location evidence="2">COPII-coated vesicle</location>
    </subcellularLocation>
    <text evidence="2 4">Enriched at the endoplasmic reticulum exit sites (By similarity). Incorporated into COPII-coated vesicles (By similarity).</text>
</comment>
<comment type="similarity">
    <text evidence="6">Belongs to the YIP1 family.</text>
</comment>
<protein>
    <recommendedName>
        <fullName>Protein YIPF5</fullName>
    </recommendedName>
    <alternativeName>
        <fullName>YIP1 family member 5</fullName>
    </alternativeName>
</protein>
<sequence length="257" mass="27962">MSGFENLNTDFYQTSYSIDDQSQQSYDYGGSGGPYSKQYAGYDYSQQGRFVPPDMMQPQQPYTGQIYQPTQAYTPASPQPFYGNSFEDEPPLLEELGINFDHIWQKTLTVLHPLKVADGSIMNETDLAGPMVFCLAFGATLLLAGKIQFGYVYGISAIGCLGMFCLLNLMSMTGVSFGCVASVLGYCLLPMILLSSFAVIFSLQGMVGIILTAGIIGWCSFSASKIFISALAMEGQQLLVAYPCALLYGVFALISVF</sequence>
<evidence type="ECO:0000250" key="1"/>
<evidence type="ECO:0000250" key="2">
    <source>
        <dbReference type="UniProtKB" id="Q5XID0"/>
    </source>
</evidence>
<evidence type="ECO:0000250" key="3">
    <source>
        <dbReference type="UniProtKB" id="Q969M3"/>
    </source>
</evidence>
<evidence type="ECO:0000250" key="4">
    <source>
        <dbReference type="UniProtKB" id="Q9EQQ2"/>
    </source>
</evidence>
<evidence type="ECO:0000255" key="5"/>
<evidence type="ECO:0000305" key="6"/>
<organism>
    <name type="scientific">Macaca fascicularis</name>
    <name type="common">Crab-eating macaque</name>
    <name type="synonym">Cynomolgus monkey</name>
    <dbReference type="NCBI Taxonomy" id="9541"/>
    <lineage>
        <taxon>Eukaryota</taxon>
        <taxon>Metazoa</taxon>
        <taxon>Chordata</taxon>
        <taxon>Craniata</taxon>
        <taxon>Vertebrata</taxon>
        <taxon>Euteleostomi</taxon>
        <taxon>Mammalia</taxon>
        <taxon>Eutheria</taxon>
        <taxon>Euarchontoglires</taxon>
        <taxon>Primates</taxon>
        <taxon>Haplorrhini</taxon>
        <taxon>Catarrhini</taxon>
        <taxon>Cercopithecidae</taxon>
        <taxon>Cercopithecinae</taxon>
        <taxon>Macaca</taxon>
    </lineage>
</organism>
<keyword id="KW-0968">Cytoplasmic vesicle</keyword>
<keyword id="KW-0256">Endoplasmic reticulum</keyword>
<keyword id="KW-0931">ER-Golgi transport</keyword>
<keyword id="KW-0333">Golgi apparatus</keyword>
<keyword id="KW-0472">Membrane</keyword>
<keyword id="KW-0653">Protein transport</keyword>
<keyword id="KW-1185">Reference proteome</keyword>
<keyword id="KW-0812">Transmembrane</keyword>
<keyword id="KW-1133">Transmembrane helix</keyword>
<keyword id="KW-0813">Transport</keyword>